<comment type="function">
    <text evidence="1 5">Elongation factor component of the super elongation complex (SEC), a complex required to increase the catalytic rate of RNA polymerase II transcription by suppressing transient pausing by the polymerase at multiple sites along the DNA. Specifically required for stimulating the elongation step of RNA polymerase II- and III-dependent snRNA gene transcription. ELL also plays an early role before its assembly into in the SEC complex by stabilizing RNA polymerase II recruitment/initiation and entry into the pause site. Required to stabilize the pre-initiation complex and early elongation. Specifically required for stimulating the elongation step of RNA polymerase II- and III-dependent snRNA gene transcription (By similarity). Elongation factor component of the little elongation complex (LEC), a complex required to regulate small nuclear RNA (snRNA) gene transcription by RNA polymerase II and III (PubMed:22195968).</text>
</comment>
<comment type="subunit">
    <text evidence="2">Component of the super elongation complex (SEC), at least composed of EAF1, EAF2, CDK9, MLLT3/AF9, AFF (AFF1 or AFF4), the P-TEFb complex and ELL (ELL, ELL2 or ELL3). Component of the little elongation complex (LEC), at least composed of ELL (ELL, ELL2 or ELL3), ZC3H8, ICE1 and ICE2. Interacts with ICE1 (via N-terminus domain). Interacts with ICE2. Interacts with AFF4; the interaction is direct. Interacts with EAF1 and EAF2 (By similarity). Interacts with USPL1 (By similarity).</text>
</comment>
<comment type="subcellular location">
    <subcellularLocation>
        <location evidence="2">Nucleus</location>
    </subcellularLocation>
    <subcellularLocation>
        <location evidence="2">Nucleus speckle</location>
    </subcellularLocation>
    <subcellularLocation>
        <location evidence="2">Nucleus</location>
        <location evidence="2">Cajal body</location>
    </subcellularLocation>
    <text evidence="2">Colocalizes with EAF2 to nuclear speckles. Colocalizes with coilin in subnuclear cajal and histone locus bodies. Translocates in the LEC complex to cajal and histone locus bodies at snRNA genes in a ICE1-dependent manner. Associates to transcriptionally active chromatin at snRNA genes (By similarity).</text>
</comment>
<comment type="similarity">
    <text evidence="6">Belongs to the ELL/occludin family.</text>
</comment>
<proteinExistence type="evidence at transcript level"/>
<protein>
    <recommendedName>
        <fullName>RNA polymerase II elongation factor ELL</fullName>
    </recommendedName>
    <alternativeName>
        <fullName>Eleven-nineteen lysine-rich leukemia protein</fullName>
    </alternativeName>
</protein>
<accession>O08856</accession>
<accession>Q3TXY9</accession>
<reference key="1">
    <citation type="journal article" date="1997" name="Proc. Natl. Acad. Sci. U.S.A.">
        <title>Developmental analysis and subcellular localization of the murine homologue of ELL.</title>
        <authorList>
            <person name="Thirman M.J."/>
            <person name="Diskin E.B."/>
            <person name="Bin S.S."/>
            <person name="Ip H.S."/>
            <person name="Miller J.M."/>
            <person name="Simon M.C."/>
        </authorList>
    </citation>
    <scope>NUCLEOTIDE SEQUENCE [MRNA]</scope>
</reference>
<reference key="2">
    <citation type="journal article" date="2005" name="Science">
        <title>The transcriptional landscape of the mammalian genome.</title>
        <authorList>
            <person name="Carninci P."/>
            <person name="Kasukawa T."/>
            <person name="Katayama S."/>
            <person name="Gough J."/>
            <person name="Frith M.C."/>
            <person name="Maeda N."/>
            <person name="Oyama R."/>
            <person name="Ravasi T."/>
            <person name="Lenhard B."/>
            <person name="Wells C."/>
            <person name="Kodzius R."/>
            <person name="Shimokawa K."/>
            <person name="Bajic V.B."/>
            <person name="Brenner S.E."/>
            <person name="Batalov S."/>
            <person name="Forrest A.R."/>
            <person name="Zavolan M."/>
            <person name="Davis M.J."/>
            <person name="Wilming L.G."/>
            <person name="Aidinis V."/>
            <person name="Allen J.E."/>
            <person name="Ambesi-Impiombato A."/>
            <person name="Apweiler R."/>
            <person name="Aturaliya R.N."/>
            <person name="Bailey T.L."/>
            <person name="Bansal M."/>
            <person name="Baxter L."/>
            <person name="Beisel K.W."/>
            <person name="Bersano T."/>
            <person name="Bono H."/>
            <person name="Chalk A.M."/>
            <person name="Chiu K.P."/>
            <person name="Choudhary V."/>
            <person name="Christoffels A."/>
            <person name="Clutterbuck D.R."/>
            <person name="Crowe M.L."/>
            <person name="Dalla E."/>
            <person name="Dalrymple B.P."/>
            <person name="de Bono B."/>
            <person name="Della Gatta G."/>
            <person name="di Bernardo D."/>
            <person name="Down T."/>
            <person name="Engstrom P."/>
            <person name="Fagiolini M."/>
            <person name="Faulkner G."/>
            <person name="Fletcher C.F."/>
            <person name="Fukushima T."/>
            <person name="Furuno M."/>
            <person name="Futaki S."/>
            <person name="Gariboldi M."/>
            <person name="Georgii-Hemming P."/>
            <person name="Gingeras T.R."/>
            <person name="Gojobori T."/>
            <person name="Green R.E."/>
            <person name="Gustincich S."/>
            <person name="Harbers M."/>
            <person name="Hayashi Y."/>
            <person name="Hensch T.K."/>
            <person name="Hirokawa N."/>
            <person name="Hill D."/>
            <person name="Huminiecki L."/>
            <person name="Iacono M."/>
            <person name="Ikeo K."/>
            <person name="Iwama A."/>
            <person name="Ishikawa T."/>
            <person name="Jakt M."/>
            <person name="Kanapin A."/>
            <person name="Katoh M."/>
            <person name="Kawasawa Y."/>
            <person name="Kelso J."/>
            <person name="Kitamura H."/>
            <person name="Kitano H."/>
            <person name="Kollias G."/>
            <person name="Krishnan S.P."/>
            <person name="Kruger A."/>
            <person name="Kummerfeld S.K."/>
            <person name="Kurochkin I.V."/>
            <person name="Lareau L.F."/>
            <person name="Lazarevic D."/>
            <person name="Lipovich L."/>
            <person name="Liu J."/>
            <person name="Liuni S."/>
            <person name="McWilliam S."/>
            <person name="Madan Babu M."/>
            <person name="Madera M."/>
            <person name="Marchionni L."/>
            <person name="Matsuda H."/>
            <person name="Matsuzawa S."/>
            <person name="Miki H."/>
            <person name="Mignone F."/>
            <person name="Miyake S."/>
            <person name="Morris K."/>
            <person name="Mottagui-Tabar S."/>
            <person name="Mulder N."/>
            <person name="Nakano N."/>
            <person name="Nakauchi H."/>
            <person name="Ng P."/>
            <person name="Nilsson R."/>
            <person name="Nishiguchi S."/>
            <person name="Nishikawa S."/>
            <person name="Nori F."/>
            <person name="Ohara O."/>
            <person name="Okazaki Y."/>
            <person name="Orlando V."/>
            <person name="Pang K.C."/>
            <person name="Pavan W.J."/>
            <person name="Pavesi G."/>
            <person name="Pesole G."/>
            <person name="Petrovsky N."/>
            <person name="Piazza S."/>
            <person name="Reed J."/>
            <person name="Reid J.F."/>
            <person name="Ring B.Z."/>
            <person name="Ringwald M."/>
            <person name="Rost B."/>
            <person name="Ruan Y."/>
            <person name="Salzberg S.L."/>
            <person name="Sandelin A."/>
            <person name="Schneider C."/>
            <person name="Schoenbach C."/>
            <person name="Sekiguchi K."/>
            <person name="Semple C.A."/>
            <person name="Seno S."/>
            <person name="Sessa L."/>
            <person name="Sheng Y."/>
            <person name="Shibata Y."/>
            <person name="Shimada H."/>
            <person name="Shimada K."/>
            <person name="Silva D."/>
            <person name="Sinclair B."/>
            <person name="Sperling S."/>
            <person name="Stupka E."/>
            <person name="Sugiura K."/>
            <person name="Sultana R."/>
            <person name="Takenaka Y."/>
            <person name="Taki K."/>
            <person name="Tammoja K."/>
            <person name="Tan S.L."/>
            <person name="Tang S."/>
            <person name="Taylor M.S."/>
            <person name="Tegner J."/>
            <person name="Teichmann S.A."/>
            <person name="Ueda H.R."/>
            <person name="van Nimwegen E."/>
            <person name="Verardo R."/>
            <person name="Wei C.L."/>
            <person name="Yagi K."/>
            <person name="Yamanishi H."/>
            <person name="Zabarovsky E."/>
            <person name="Zhu S."/>
            <person name="Zimmer A."/>
            <person name="Hide W."/>
            <person name="Bult C."/>
            <person name="Grimmond S.M."/>
            <person name="Teasdale R.D."/>
            <person name="Liu E.T."/>
            <person name="Brusic V."/>
            <person name="Quackenbush J."/>
            <person name="Wahlestedt C."/>
            <person name="Mattick J.S."/>
            <person name="Hume D.A."/>
            <person name="Kai C."/>
            <person name="Sasaki D."/>
            <person name="Tomaru Y."/>
            <person name="Fukuda S."/>
            <person name="Kanamori-Katayama M."/>
            <person name="Suzuki M."/>
            <person name="Aoki J."/>
            <person name="Arakawa T."/>
            <person name="Iida J."/>
            <person name="Imamura K."/>
            <person name="Itoh M."/>
            <person name="Kato T."/>
            <person name="Kawaji H."/>
            <person name="Kawagashira N."/>
            <person name="Kawashima T."/>
            <person name="Kojima M."/>
            <person name="Kondo S."/>
            <person name="Konno H."/>
            <person name="Nakano K."/>
            <person name="Ninomiya N."/>
            <person name="Nishio T."/>
            <person name="Okada M."/>
            <person name="Plessy C."/>
            <person name="Shibata K."/>
            <person name="Shiraki T."/>
            <person name="Suzuki S."/>
            <person name="Tagami M."/>
            <person name="Waki K."/>
            <person name="Watahiki A."/>
            <person name="Okamura-Oho Y."/>
            <person name="Suzuki H."/>
            <person name="Kawai J."/>
            <person name="Hayashizaki Y."/>
        </authorList>
    </citation>
    <scope>NUCLEOTIDE SEQUENCE [LARGE SCALE MRNA]</scope>
    <source>
        <strain>C57BL/6J</strain>
        <tissue>Visual cortex</tissue>
    </source>
</reference>
<reference key="3">
    <citation type="submission" date="2005-07" db="EMBL/GenBank/DDBJ databases">
        <authorList>
            <person name="Mural R.J."/>
            <person name="Adams M.D."/>
            <person name="Myers E.W."/>
            <person name="Smith H.O."/>
            <person name="Venter J.C."/>
        </authorList>
    </citation>
    <scope>NUCLEOTIDE SEQUENCE [LARGE SCALE GENOMIC DNA]</scope>
</reference>
<reference key="4">
    <citation type="journal article" date="2004" name="Genome Res.">
        <title>The status, quality, and expansion of the NIH full-length cDNA project: the Mammalian Gene Collection (MGC).</title>
        <authorList>
            <consortium name="The MGC Project Team"/>
        </authorList>
    </citation>
    <scope>NUCLEOTIDE SEQUENCE [LARGE SCALE MRNA]</scope>
    <source>
        <strain>FVB/N</strain>
        <tissue>Liver</tissue>
        <tissue>Mammary gland</tissue>
    </source>
</reference>
<reference key="5">
    <citation type="journal article" date="2011" name="Mol. Cell">
        <title>The little elongation complex regulates small nuclear RNA transcription.</title>
        <authorList>
            <person name="Smith E.R."/>
            <person name="Lin C."/>
            <person name="Garrett A.S."/>
            <person name="Thornton J."/>
            <person name="Mohaghegh N."/>
            <person name="Hu D."/>
            <person name="Jackson J."/>
            <person name="Saraf A."/>
            <person name="Swanson S.K."/>
            <person name="Seidel C."/>
            <person name="Florens L."/>
            <person name="Washburn M.P."/>
            <person name="Eissenberg J.C."/>
            <person name="Shilatifard A."/>
        </authorList>
    </citation>
    <scope>FUNCTION</scope>
</reference>
<keyword id="KW-0007">Acetylation</keyword>
<keyword id="KW-0539">Nucleus</keyword>
<keyword id="KW-0597">Phosphoprotein</keyword>
<keyword id="KW-1185">Reference proteome</keyword>
<keyword id="KW-0804">Transcription</keyword>
<keyword id="KW-0805">Transcription regulation</keyword>
<feature type="initiator methionine" description="Removed" evidence="2">
    <location>
        <position position="1"/>
    </location>
</feature>
<feature type="chain" id="PRO_0000146734" description="RNA polymerase II elongation factor ELL">
    <location>
        <begin position="2"/>
        <end position="602"/>
    </location>
</feature>
<feature type="domain" description="OCEL" evidence="3">
    <location>
        <begin position="488"/>
        <end position="598"/>
    </location>
</feature>
<feature type="region of interest" description="Disordered" evidence="4">
    <location>
        <begin position="292"/>
        <end position="489"/>
    </location>
</feature>
<feature type="compositionally biased region" description="Polar residues" evidence="4">
    <location>
        <begin position="332"/>
        <end position="341"/>
    </location>
</feature>
<feature type="compositionally biased region" description="Low complexity" evidence="4">
    <location>
        <begin position="403"/>
        <end position="416"/>
    </location>
</feature>
<feature type="compositionally biased region" description="Basic residues" evidence="4">
    <location>
        <begin position="431"/>
        <end position="444"/>
    </location>
</feature>
<feature type="compositionally biased region" description="Pro residues" evidence="4">
    <location>
        <begin position="454"/>
        <end position="470"/>
    </location>
</feature>
<feature type="modified residue" description="N-acetylalanine" evidence="2">
    <location>
        <position position="2"/>
    </location>
</feature>
<feature type="modified residue" description="Phosphothreonine" evidence="2">
    <location>
        <position position="180"/>
    </location>
</feature>
<feature type="modified residue" description="Phosphoserine" evidence="2">
    <location>
        <position position="300"/>
    </location>
</feature>
<feature type="modified residue" description="Phosphoserine" evidence="2">
    <location>
        <position position="542"/>
    </location>
</feature>
<feature type="sequence conflict" description="In Ref. 1; AAC53150 and 4; AAH14816/AAH24894." evidence="6" ref="1 4">
    <original>Y</original>
    <variation>H</variation>
    <location>
        <position position="103"/>
    </location>
</feature>
<organism>
    <name type="scientific">Mus musculus</name>
    <name type="common">Mouse</name>
    <dbReference type="NCBI Taxonomy" id="10090"/>
    <lineage>
        <taxon>Eukaryota</taxon>
        <taxon>Metazoa</taxon>
        <taxon>Chordata</taxon>
        <taxon>Craniata</taxon>
        <taxon>Vertebrata</taxon>
        <taxon>Euteleostomi</taxon>
        <taxon>Mammalia</taxon>
        <taxon>Eutheria</taxon>
        <taxon>Euarchontoglires</taxon>
        <taxon>Glires</taxon>
        <taxon>Rodentia</taxon>
        <taxon>Myomorpha</taxon>
        <taxon>Muroidea</taxon>
        <taxon>Muridae</taxon>
        <taxon>Murinae</taxon>
        <taxon>Mus</taxon>
        <taxon>Mus</taxon>
    </lineage>
</organism>
<dbReference type="EMBL" id="U80227">
    <property type="protein sequence ID" value="AAC53150.1"/>
    <property type="molecule type" value="mRNA"/>
</dbReference>
<dbReference type="EMBL" id="AK159027">
    <property type="protein sequence ID" value="BAE34775.1"/>
    <property type="molecule type" value="mRNA"/>
</dbReference>
<dbReference type="EMBL" id="CH466569">
    <property type="protein sequence ID" value="EDL28843.1"/>
    <property type="molecule type" value="Genomic_DNA"/>
</dbReference>
<dbReference type="EMBL" id="BC014816">
    <property type="protein sequence ID" value="AAH14816.1"/>
    <property type="molecule type" value="mRNA"/>
</dbReference>
<dbReference type="EMBL" id="BC024894">
    <property type="protein sequence ID" value="AAH24894.1"/>
    <property type="molecule type" value="mRNA"/>
</dbReference>
<dbReference type="CCDS" id="CCDS22372.1"/>
<dbReference type="RefSeq" id="NP_031950.2">
    <property type="nucleotide sequence ID" value="NM_007924.3"/>
</dbReference>
<dbReference type="SMR" id="O08856"/>
<dbReference type="BioGRID" id="199432">
    <property type="interactions" value="5"/>
</dbReference>
<dbReference type="FunCoup" id="O08856">
    <property type="interactions" value="3524"/>
</dbReference>
<dbReference type="IntAct" id="O08856">
    <property type="interactions" value="6"/>
</dbReference>
<dbReference type="MINT" id="O08856"/>
<dbReference type="STRING" id="10090.ENSMUSP00000091163"/>
<dbReference type="GlyGen" id="O08856">
    <property type="glycosylation" value="2 sites"/>
</dbReference>
<dbReference type="iPTMnet" id="O08856"/>
<dbReference type="PhosphoSitePlus" id="O08856"/>
<dbReference type="SwissPalm" id="O08856"/>
<dbReference type="jPOST" id="O08856"/>
<dbReference type="PaxDb" id="10090-ENSMUSP00000091163"/>
<dbReference type="PeptideAtlas" id="O08856"/>
<dbReference type="ProteomicsDB" id="275526"/>
<dbReference type="Pumba" id="O08856"/>
<dbReference type="Antibodypedia" id="15081">
    <property type="antibodies" value="399 antibodies from 33 providers"/>
</dbReference>
<dbReference type="DNASU" id="13716"/>
<dbReference type="Ensembl" id="ENSMUST00000093454.8">
    <property type="protein sequence ID" value="ENSMUSP00000091163.7"/>
    <property type="gene ID" value="ENSMUSG00000070002.8"/>
</dbReference>
<dbReference type="GeneID" id="13716"/>
<dbReference type="KEGG" id="mmu:13716"/>
<dbReference type="UCSC" id="uc009mau.1">
    <property type="organism name" value="mouse"/>
</dbReference>
<dbReference type="AGR" id="MGI:109377"/>
<dbReference type="CTD" id="8178"/>
<dbReference type="MGI" id="MGI:109377">
    <property type="gene designation" value="Ell"/>
</dbReference>
<dbReference type="VEuPathDB" id="HostDB:ENSMUSG00000070002"/>
<dbReference type="eggNOG" id="KOG4796">
    <property type="taxonomic scope" value="Eukaryota"/>
</dbReference>
<dbReference type="GeneTree" id="ENSGT00940000155914"/>
<dbReference type="HOGENOM" id="CLU_021268_0_0_1"/>
<dbReference type="InParanoid" id="O08856"/>
<dbReference type="OMA" id="QQFQSWH"/>
<dbReference type="OrthoDB" id="6284217at2759"/>
<dbReference type="PhylomeDB" id="O08856"/>
<dbReference type="TreeFam" id="TF326161"/>
<dbReference type="Reactome" id="R-MMU-112382">
    <property type="pathway name" value="Formation of RNA Pol II elongation complex"/>
</dbReference>
<dbReference type="Reactome" id="R-MMU-674695">
    <property type="pathway name" value="RNA Polymerase II Pre-transcription Events"/>
</dbReference>
<dbReference type="Reactome" id="R-MMU-6796648">
    <property type="pathway name" value="TP53 Regulates Transcription of DNA Repair Genes"/>
</dbReference>
<dbReference type="Reactome" id="R-MMU-6807505">
    <property type="pathway name" value="RNA polymerase II transcribes snRNA genes"/>
</dbReference>
<dbReference type="Reactome" id="R-MMU-75955">
    <property type="pathway name" value="RNA Polymerase II Transcription Elongation"/>
</dbReference>
<dbReference type="BioGRID-ORCS" id="13716">
    <property type="hits" value="22 hits in 82 CRISPR screens"/>
</dbReference>
<dbReference type="ChiTaRS" id="Ell">
    <property type="organism name" value="mouse"/>
</dbReference>
<dbReference type="PRO" id="PR:O08856"/>
<dbReference type="Proteomes" id="UP000000589">
    <property type="component" value="Chromosome 8"/>
</dbReference>
<dbReference type="RNAct" id="O08856">
    <property type="molecule type" value="protein"/>
</dbReference>
<dbReference type="Bgee" id="ENSMUSG00000070002">
    <property type="expression patterns" value="Expressed in ileal epithelium and 203 other cell types or tissues"/>
</dbReference>
<dbReference type="ExpressionAtlas" id="O08856">
    <property type="expression patterns" value="baseline and differential"/>
</dbReference>
<dbReference type="GO" id="GO:0015030">
    <property type="term" value="C:Cajal body"/>
    <property type="evidence" value="ECO:0000250"/>
    <property type="project" value="UniProtKB"/>
</dbReference>
<dbReference type="GO" id="GO:0005829">
    <property type="term" value="C:cytosol"/>
    <property type="evidence" value="ECO:0007669"/>
    <property type="project" value="Ensembl"/>
</dbReference>
<dbReference type="GO" id="GO:0000791">
    <property type="term" value="C:euchromatin"/>
    <property type="evidence" value="ECO:0000250"/>
    <property type="project" value="UniProtKB"/>
</dbReference>
<dbReference type="GO" id="GO:0035363">
    <property type="term" value="C:histone locus body"/>
    <property type="evidence" value="ECO:0000250"/>
    <property type="project" value="UniProtKB"/>
</dbReference>
<dbReference type="GO" id="GO:0016607">
    <property type="term" value="C:nuclear speck"/>
    <property type="evidence" value="ECO:0000250"/>
    <property type="project" value="UniProtKB"/>
</dbReference>
<dbReference type="GO" id="GO:0008023">
    <property type="term" value="C:transcription elongation factor complex"/>
    <property type="evidence" value="ECO:0000250"/>
    <property type="project" value="UniProtKB"/>
</dbReference>
<dbReference type="GO" id="GO:0019902">
    <property type="term" value="F:phosphatase binding"/>
    <property type="evidence" value="ECO:0000250"/>
    <property type="project" value="UniProtKB"/>
</dbReference>
<dbReference type="GO" id="GO:0001701">
    <property type="term" value="P:in utero embryonic development"/>
    <property type="evidence" value="ECO:0000315"/>
    <property type="project" value="MGI"/>
</dbReference>
<dbReference type="GO" id="GO:0045945">
    <property type="term" value="P:positive regulation of transcription by RNA polymerase III"/>
    <property type="evidence" value="ECO:0000250"/>
    <property type="project" value="UniProtKB"/>
</dbReference>
<dbReference type="GO" id="GO:0032968">
    <property type="term" value="P:positive regulation of transcription elongation by RNA polymerase II"/>
    <property type="evidence" value="ECO:0000250"/>
    <property type="project" value="UniProtKB"/>
</dbReference>
<dbReference type="GO" id="GO:0042795">
    <property type="term" value="P:snRNA transcription by RNA polymerase II"/>
    <property type="evidence" value="ECO:0000315"/>
    <property type="project" value="UniProtKB"/>
</dbReference>
<dbReference type="GO" id="GO:0042796">
    <property type="term" value="P:snRNA transcription by RNA polymerase III"/>
    <property type="evidence" value="ECO:0000250"/>
    <property type="project" value="UniProtKB"/>
</dbReference>
<dbReference type="GO" id="GO:0006368">
    <property type="term" value="P:transcription elongation by RNA polymerase II"/>
    <property type="evidence" value="ECO:0007669"/>
    <property type="project" value="InterPro"/>
</dbReference>
<dbReference type="FunFam" id="1.10.10.2670:FF:000002">
    <property type="entry name" value="RNA polymerase II elongation factor ELL2"/>
    <property type="match status" value="1"/>
</dbReference>
<dbReference type="Gene3D" id="6.10.140.340">
    <property type="match status" value="1"/>
</dbReference>
<dbReference type="Gene3D" id="1.10.10.2670">
    <property type="entry name" value="E3 ubiquitin-protein ligase"/>
    <property type="match status" value="1"/>
</dbReference>
<dbReference type="InterPro" id="IPR042065">
    <property type="entry name" value="E3_ELL-like"/>
</dbReference>
<dbReference type="InterPro" id="IPR031176">
    <property type="entry name" value="ELL/occludin"/>
</dbReference>
<dbReference type="InterPro" id="IPR019464">
    <property type="entry name" value="ELL_N"/>
</dbReference>
<dbReference type="InterPro" id="IPR010844">
    <property type="entry name" value="Occludin_ELL"/>
</dbReference>
<dbReference type="InterPro" id="IPR036390">
    <property type="entry name" value="WH_DNA-bd_sf"/>
</dbReference>
<dbReference type="PANTHER" id="PTHR23288">
    <property type="entry name" value="OCCLUDIN AND RNA POLYMERASE II ELONGATION FACTOR ELL"/>
    <property type="match status" value="1"/>
</dbReference>
<dbReference type="PANTHER" id="PTHR23288:SF9">
    <property type="entry name" value="RNA POLYMERASE II ELONGATION FACTOR ELL"/>
    <property type="match status" value="1"/>
</dbReference>
<dbReference type="Pfam" id="PF10390">
    <property type="entry name" value="ELL"/>
    <property type="match status" value="1"/>
</dbReference>
<dbReference type="Pfam" id="PF07303">
    <property type="entry name" value="Occludin_ELL"/>
    <property type="match status" value="1"/>
</dbReference>
<dbReference type="SUPFAM" id="SSF144292">
    <property type="entry name" value="occludin/ELL-like"/>
    <property type="match status" value="1"/>
</dbReference>
<dbReference type="SUPFAM" id="SSF46785">
    <property type="entry name" value="Winged helix' DNA-binding domain"/>
    <property type="match status" value="1"/>
</dbReference>
<dbReference type="PROSITE" id="PS51980">
    <property type="entry name" value="OCEL"/>
    <property type="match status" value="1"/>
</dbReference>
<evidence type="ECO:0000250" key="1"/>
<evidence type="ECO:0000250" key="2">
    <source>
        <dbReference type="UniProtKB" id="P55199"/>
    </source>
</evidence>
<evidence type="ECO:0000255" key="3">
    <source>
        <dbReference type="PROSITE-ProRule" id="PRU01324"/>
    </source>
</evidence>
<evidence type="ECO:0000256" key="4">
    <source>
        <dbReference type="SAM" id="MobiDB-lite"/>
    </source>
</evidence>
<evidence type="ECO:0000269" key="5">
    <source>
    </source>
</evidence>
<evidence type="ECO:0000305" key="6"/>
<name>ELL_MOUSE</name>
<sequence>MAALKEARSYGLSCGRVSDGSRVSVFHVKLTDSALKAFESYRAHQDSVSLRPSIRFEGSQGHISIPQPDCPEEVRAFSFYLSNIGRDSPQGSFDCIQQYVSSYGDVHLDCLGSIQDKVTVCATDDSYQKARQSMAQAEEETRSRSAIVIKAGGRYMGKKVQFRKPAPGAADAVPSRKRATPINLASAIRKSSGSGASSVVQRPFRDRVLHLLALRPYRKAELLLRLQKDGLTQADKDTLDSLLQQVASVNPKDGTCTLQDCMYKSLQKDWPGYSEGDRQLLKRMLMRKLCQPQNATTDSSPPREHGRSASPSQKRPTDFIDPLASKKPRISHFTQRAQPTLNGKLGAPNGHETLLPAPGPTPSDTLSSSHLPPRLEPPRTHDPLADVSNDLGHSTQDYKHQEATPAPAPHLGLPLLTDFPQAEQPTSSSHTHSRPKKKSKKHKDKERPPEERPPAPQPDAPTAPALPPDAPGLNGACDNEPTSSSETPDYLLKYPAISSSEQRQSYKNDFNAEYSEYRSLHARIEQITRRFTQLDAQLRQLSQGSDEYETTRGQILQEYRKIKKTNTNYSCEKRRCEYLHRKLAHIKRLIAEYDQRQLQAWP</sequence>
<gene>
    <name type="primary">Ell</name>
</gene>